<comment type="function">
    <text evidence="1">F-actin regulator involved in anterograde Golgi to endosome transport: upon ubiquitination via 'Lys-33'-linked ubiquitin chains by the BCR(KLHL20) E3 ubiquitin ligase complex, interacts with EPS15 and localizes to the trans-Golgi network, where it promotes actin polymerization, thereby facilitating post-Golgi trafficking. May play a role in the maintenance of the Golgi apparatus morphology (By similarity).</text>
</comment>
<comment type="subunit">
    <text evidence="1">Interacts with clathrin adapter AP1 complex. This interaction takes place at Golgi membranes and not AP1-positive endosomal membranes. Interacts (when ubiquitinated at Lys-472) with EPS15 (By similarity).</text>
</comment>
<comment type="subcellular location">
    <subcellularLocation>
        <location evidence="1">Golgi apparatus membrane</location>
    </subcellularLocation>
    <subcellularLocation>
        <location evidence="1">Golgi apparatus</location>
        <location evidence="1">trans-Golgi network</location>
    </subcellularLocation>
    <subcellularLocation>
        <location evidence="1">Cytoplasmic vesicle</location>
    </subcellularLocation>
    <subcellularLocation>
        <location evidence="1">Cytoplasm</location>
        <location evidence="1">Cytosol</location>
    </subcellularLocation>
    <text evidence="1">Predominantly cytosolic. Detected on vesicle-like cytoplasmic structures and on the cis-Golgi. Not associated with actin filaments (By similarity).</text>
</comment>
<comment type="PTM">
    <text evidence="1">The membrane-associated form is phosphorylated on tyrosine residues.</text>
</comment>
<comment type="PTM">
    <text evidence="1">Ubiquitinated via 'Lys-33'-linked ubiquitin chains by the BCR(KLHL20) E3 ubiquitin ligase complex: 'Lys-33'-linked ubiquitination promotes interaction with EPS15 and facilitates actin polymerization at the trans-Golgi network, thereby facilitating post-Golgi trafficking. Deubiquitinated by ZRANB1/TRABID (By similarity).</text>
</comment>
<comment type="similarity">
    <text evidence="6">Belongs to the WD repeat coronin family.</text>
</comment>
<gene>
    <name type="primary">CORO7</name>
</gene>
<proteinExistence type="evidence at transcript level"/>
<protein>
    <recommendedName>
        <fullName>Coronin-7</fullName>
        <shortName>Crn7</shortName>
    </recommendedName>
</protein>
<organism>
    <name type="scientific">Pongo abelii</name>
    <name type="common">Sumatran orangutan</name>
    <name type="synonym">Pongo pygmaeus abelii</name>
    <dbReference type="NCBI Taxonomy" id="9601"/>
    <lineage>
        <taxon>Eukaryota</taxon>
        <taxon>Metazoa</taxon>
        <taxon>Chordata</taxon>
        <taxon>Craniata</taxon>
        <taxon>Vertebrata</taxon>
        <taxon>Euteleostomi</taxon>
        <taxon>Mammalia</taxon>
        <taxon>Eutheria</taxon>
        <taxon>Euarchontoglires</taxon>
        <taxon>Primates</taxon>
        <taxon>Haplorrhini</taxon>
        <taxon>Catarrhini</taxon>
        <taxon>Hominidae</taxon>
        <taxon>Pongo</taxon>
    </lineage>
</organism>
<sequence>MNRFRVSKFRHTEARPPRREAWLSDIRAGTAPSCRNHIKSSCSLITFNSDRPGVLGIVPLQGQGEDKRRVAHLGCHSDLVTDLDFSPFDDFLLATGSADRTVKLWRLPGPGQALPSAPGVVLGPEDLPVEVLQFHPTSDGILVSAAGTTVKVWDAAKQQPLTELEAHGDLVQSAVWSRDGALVGTACKDKQLRIFDPRTKPQASQSTQAHENSRDSRLAWTGTWEHFVSTGFNQMREHEVKLWDTRFFSSALASLTLDTSLGCLMPLLDPDSGLLVLAGKGKRQLYCYEVVPQQPALSPVTQCVLESVLRGAALVPRQALAVMSCEVLRVLQLSDTAIVPIGYHVPRKAVEFHEDLFPDTAGCVPATDPHSWWAGDNQQAQKVSLNPACRPHPSFTSCLVPPTEPLPDTAQPAVTETPVGDADASEGFSSPPSSLTSPSTPSSLGPTLSSTSGIGTGPSLRSLQSLLGPSSKFRHAQGTVLHRDSHITNLKGLNLTTPGESDGFCANKLRVAVPLLSSGGQVAVLELRKPGRLPDTALPTLQNGAAVTDLAWDPFDPHRLAVAGEDARIRLWRVPAEGLEEVLTVPETVLTGHMEKICSLRFHPLAADVLASSSYDLTVRIWDLQAGVDRLKLQGHQDQIFSLAWSPDGQQLATVCKDGRVRVYRPRSGPEPLQEGPGPKGGRGARIVWVCDGRCLLVSGFDSQSERQLLLYEAEALAGGPLAVLGLDVAPSTLVPSYEPRHWPGAPDWQGDARVFLYELLPESPFFMECNSFTSPDPHKGFVLLPKTECDVREVELMRCLRCASPPWSLWPSGCPESGKSSFQDDVFPDTAVSWEPVLSAEAWLQGANGQPWLLSLQPPDMSPVSQAPREAPARRAPSSAQYLEEKSDQQKKEELLNAMVAKLGNREDPLPQDSFEGVDEDEWD</sequence>
<evidence type="ECO:0000250" key="1"/>
<evidence type="ECO:0000250" key="2">
    <source>
        <dbReference type="UniProtKB" id="O35828"/>
    </source>
</evidence>
<evidence type="ECO:0000250" key="3">
    <source>
        <dbReference type="UniProtKB" id="P57737"/>
    </source>
</evidence>
<evidence type="ECO:0000250" key="4">
    <source>
        <dbReference type="UniProtKB" id="Q9D2V7"/>
    </source>
</evidence>
<evidence type="ECO:0000256" key="5">
    <source>
        <dbReference type="SAM" id="MobiDB-lite"/>
    </source>
</evidence>
<evidence type="ECO:0000305" key="6"/>
<accession>Q5RBW3</accession>
<dbReference type="EMBL" id="CR858520">
    <property type="protein sequence ID" value="CAH90747.1"/>
    <property type="molecule type" value="mRNA"/>
</dbReference>
<dbReference type="RefSeq" id="NP_001127329.1">
    <property type="nucleotide sequence ID" value="NM_001133857.1"/>
</dbReference>
<dbReference type="SMR" id="Q5RBW3"/>
<dbReference type="FunCoup" id="Q5RBW3">
    <property type="interactions" value="1523"/>
</dbReference>
<dbReference type="STRING" id="9601.ENSPPYP00000007981"/>
<dbReference type="GeneID" id="100174390"/>
<dbReference type="KEGG" id="pon:100174390"/>
<dbReference type="CTD" id="79585"/>
<dbReference type="eggNOG" id="KOG1445">
    <property type="taxonomic scope" value="Eukaryota"/>
</dbReference>
<dbReference type="InParanoid" id="Q5RBW3"/>
<dbReference type="OrthoDB" id="1850764at2759"/>
<dbReference type="Proteomes" id="UP000001595">
    <property type="component" value="Unplaced"/>
</dbReference>
<dbReference type="GO" id="GO:0031410">
    <property type="term" value="C:cytoplasmic vesicle"/>
    <property type="evidence" value="ECO:0007669"/>
    <property type="project" value="UniProtKB-KW"/>
</dbReference>
<dbReference type="GO" id="GO:0005829">
    <property type="term" value="C:cytosol"/>
    <property type="evidence" value="ECO:0007669"/>
    <property type="project" value="UniProtKB-SubCell"/>
</dbReference>
<dbReference type="GO" id="GO:0000139">
    <property type="term" value="C:Golgi membrane"/>
    <property type="evidence" value="ECO:0007669"/>
    <property type="project" value="UniProtKB-SubCell"/>
</dbReference>
<dbReference type="GO" id="GO:0005802">
    <property type="term" value="C:trans-Golgi network"/>
    <property type="evidence" value="ECO:0000250"/>
    <property type="project" value="UniProtKB"/>
</dbReference>
<dbReference type="GO" id="GO:0003779">
    <property type="term" value="F:actin binding"/>
    <property type="evidence" value="ECO:0000250"/>
    <property type="project" value="UniProtKB"/>
</dbReference>
<dbReference type="GO" id="GO:0030041">
    <property type="term" value="P:actin filament polymerization"/>
    <property type="evidence" value="ECO:0000250"/>
    <property type="project" value="UniProtKB"/>
</dbReference>
<dbReference type="GO" id="GO:0006895">
    <property type="term" value="P:Golgi to endosome transport"/>
    <property type="evidence" value="ECO:0000250"/>
    <property type="project" value="UniProtKB"/>
</dbReference>
<dbReference type="GO" id="GO:0015031">
    <property type="term" value="P:protein transport"/>
    <property type="evidence" value="ECO:0007669"/>
    <property type="project" value="UniProtKB-KW"/>
</dbReference>
<dbReference type="FunFam" id="2.130.10.10:FF:000076">
    <property type="entry name" value="Coronin"/>
    <property type="match status" value="1"/>
</dbReference>
<dbReference type="FunFam" id="2.130.10.10:FF:000310">
    <property type="entry name" value="Coronin"/>
    <property type="match status" value="1"/>
</dbReference>
<dbReference type="Gene3D" id="2.130.10.10">
    <property type="entry name" value="YVTN repeat-like/Quinoprotein amine dehydrogenase"/>
    <property type="match status" value="2"/>
</dbReference>
<dbReference type="InterPro" id="IPR015505">
    <property type="entry name" value="Coronin"/>
</dbReference>
<dbReference type="InterPro" id="IPR015048">
    <property type="entry name" value="DUF1899"/>
</dbReference>
<dbReference type="InterPro" id="IPR020472">
    <property type="entry name" value="G-protein_beta_WD-40_rep"/>
</dbReference>
<dbReference type="InterPro" id="IPR015943">
    <property type="entry name" value="WD40/YVTN_repeat-like_dom_sf"/>
</dbReference>
<dbReference type="InterPro" id="IPR019775">
    <property type="entry name" value="WD40_repeat_CS"/>
</dbReference>
<dbReference type="InterPro" id="IPR036322">
    <property type="entry name" value="WD40_repeat_dom_sf"/>
</dbReference>
<dbReference type="InterPro" id="IPR001680">
    <property type="entry name" value="WD40_rpt"/>
</dbReference>
<dbReference type="PANTHER" id="PTHR10856">
    <property type="entry name" value="CORONIN"/>
    <property type="match status" value="1"/>
</dbReference>
<dbReference type="PANTHER" id="PTHR10856:SF20">
    <property type="entry name" value="CORONIN-7"/>
    <property type="match status" value="1"/>
</dbReference>
<dbReference type="Pfam" id="PF08953">
    <property type="entry name" value="DUF1899"/>
    <property type="match status" value="2"/>
</dbReference>
<dbReference type="Pfam" id="PF00400">
    <property type="entry name" value="WD40"/>
    <property type="match status" value="5"/>
</dbReference>
<dbReference type="Pfam" id="PF16300">
    <property type="entry name" value="WD40_4"/>
    <property type="match status" value="2"/>
</dbReference>
<dbReference type="PRINTS" id="PR00320">
    <property type="entry name" value="GPROTEINBRPT"/>
</dbReference>
<dbReference type="SMART" id="SM01166">
    <property type="entry name" value="DUF1899"/>
    <property type="match status" value="2"/>
</dbReference>
<dbReference type="SMART" id="SM01167">
    <property type="entry name" value="DUF1900"/>
    <property type="match status" value="2"/>
</dbReference>
<dbReference type="SMART" id="SM00320">
    <property type="entry name" value="WD40"/>
    <property type="match status" value="7"/>
</dbReference>
<dbReference type="SUPFAM" id="SSF50978">
    <property type="entry name" value="WD40 repeat-like"/>
    <property type="match status" value="2"/>
</dbReference>
<dbReference type="PROSITE" id="PS00678">
    <property type="entry name" value="WD_REPEATS_1"/>
    <property type="match status" value="1"/>
</dbReference>
<dbReference type="PROSITE" id="PS50082">
    <property type="entry name" value="WD_REPEATS_2"/>
    <property type="match status" value="4"/>
</dbReference>
<dbReference type="PROSITE" id="PS50294">
    <property type="entry name" value="WD_REPEATS_REGION"/>
    <property type="match status" value="2"/>
</dbReference>
<keyword id="KW-0009">Actin-binding</keyword>
<keyword id="KW-0963">Cytoplasm</keyword>
<keyword id="KW-0968">Cytoplasmic vesicle</keyword>
<keyword id="KW-0333">Golgi apparatus</keyword>
<keyword id="KW-1017">Isopeptide bond</keyword>
<keyword id="KW-0472">Membrane</keyword>
<keyword id="KW-0597">Phosphoprotein</keyword>
<keyword id="KW-0653">Protein transport</keyword>
<keyword id="KW-1185">Reference proteome</keyword>
<keyword id="KW-0677">Repeat</keyword>
<keyword id="KW-0813">Transport</keyword>
<keyword id="KW-0832">Ubl conjugation</keyword>
<keyword id="KW-0853">WD repeat</keyword>
<reference key="1">
    <citation type="submission" date="2004-11" db="EMBL/GenBank/DDBJ databases">
        <authorList>
            <consortium name="The German cDNA consortium"/>
        </authorList>
    </citation>
    <scope>NUCLEOTIDE SEQUENCE [LARGE SCALE MRNA]</scope>
    <source>
        <tissue>Brain cortex</tissue>
    </source>
</reference>
<feature type="chain" id="PRO_0000284444" description="Coronin-7">
    <location>
        <begin position="1"/>
        <end position="925"/>
    </location>
</feature>
<feature type="repeat" description="WD 1">
    <location>
        <begin position="75"/>
        <end position="115"/>
    </location>
</feature>
<feature type="repeat" description="WD 2">
    <location>
        <begin position="124"/>
        <end position="163"/>
    </location>
</feature>
<feature type="repeat" description="WD 3">
    <location>
        <begin position="166"/>
        <end position="205"/>
    </location>
</feature>
<feature type="repeat" description="WD 4">
    <location>
        <begin position="209"/>
        <end position="253"/>
    </location>
</feature>
<feature type="repeat" description="WD 5">
    <location>
        <begin position="542"/>
        <end position="582"/>
    </location>
</feature>
<feature type="repeat" description="WD 6">
    <location>
        <begin position="592"/>
        <end position="632"/>
    </location>
</feature>
<feature type="repeat" description="WD 7">
    <location>
        <begin position="635"/>
        <end position="674"/>
    </location>
</feature>
<feature type="repeat" description="WD 8">
    <location>
        <begin position="728"/>
        <end position="768"/>
    </location>
</feature>
<feature type="region of interest" description="Disordered" evidence="5">
    <location>
        <begin position="196"/>
        <end position="216"/>
    </location>
</feature>
<feature type="region of interest" description="Disordered" evidence="5">
    <location>
        <begin position="399"/>
        <end position="465"/>
    </location>
</feature>
<feature type="region of interest" description="Disordered" evidence="5">
    <location>
        <begin position="857"/>
        <end position="925"/>
    </location>
</feature>
<feature type="compositionally biased region" description="Polar residues" evidence="5">
    <location>
        <begin position="201"/>
        <end position="210"/>
    </location>
</feature>
<feature type="compositionally biased region" description="Low complexity" evidence="5">
    <location>
        <begin position="429"/>
        <end position="460"/>
    </location>
</feature>
<feature type="compositionally biased region" description="Low complexity" evidence="5">
    <location>
        <begin position="866"/>
        <end position="882"/>
    </location>
</feature>
<feature type="compositionally biased region" description="Basic and acidic residues" evidence="5">
    <location>
        <begin position="884"/>
        <end position="896"/>
    </location>
</feature>
<feature type="modified residue" description="Phosphoserine" evidence="4">
    <location>
        <position position="462"/>
    </location>
</feature>
<feature type="modified residue" description="Phosphoserine" evidence="2">
    <location>
        <position position="465"/>
    </location>
</feature>
<feature type="modified residue" description="Phosphoserine" evidence="4">
    <location>
        <position position="915"/>
    </location>
</feature>
<feature type="cross-link" description="Glycyl lysine isopeptide (Lys-Gly) (interchain with G-Cter in ubiquitin)" evidence="3">
    <location>
        <position position="472"/>
    </location>
</feature>
<feature type="cross-link" description="Glycyl lysine isopeptide (Lys-Gly) (interchain with G-Cter in ubiquitin)" evidence="3">
    <location>
        <position position="680"/>
    </location>
</feature>
<name>CORO7_PONAB</name>